<gene>
    <name type="primary">Ccdc80</name>
    <name type="synonym">Urb</name>
</gene>
<accession>Q8R2G6</accession>
<accession>A1A4B0</accession>
<accession>Q3V1Y4</accession>
<accession>Q4VA97</accession>
<accession>Q6PDE5</accession>
<accession>Q8C043</accession>
<accession>Q9CRM1</accession>
<accession>Q9CT39</accession>
<accession>Q9D6Z4</accession>
<evidence type="ECO:0000250" key="1">
    <source>
        <dbReference type="UniProtKB" id="Q76M96"/>
    </source>
</evidence>
<evidence type="ECO:0000255" key="2"/>
<evidence type="ECO:0000256" key="3">
    <source>
        <dbReference type="SAM" id="MobiDB-lite"/>
    </source>
</evidence>
<evidence type="ECO:0000269" key="4">
    <source>
    </source>
</evidence>
<evidence type="ECO:0000269" key="5">
    <source>
    </source>
</evidence>
<evidence type="ECO:0000269" key="6">
    <source>
    </source>
</evidence>
<evidence type="ECO:0000305" key="7"/>
<dbReference type="EMBL" id="AB075019">
    <property type="protein sequence ID" value="BAB85613.1"/>
    <property type="molecule type" value="mRNA"/>
</dbReference>
<dbReference type="EMBL" id="AK009795">
    <property type="protein sequence ID" value="BAB26508.1"/>
    <property type="status" value="ALT_SEQ"/>
    <property type="molecule type" value="mRNA"/>
</dbReference>
<dbReference type="EMBL" id="AK011256">
    <property type="protein sequence ID" value="BAB27498.1"/>
    <property type="molecule type" value="mRNA"/>
</dbReference>
<dbReference type="EMBL" id="AK020169">
    <property type="protein sequence ID" value="BAB32018.1"/>
    <property type="status" value="ALT_FRAME"/>
    <property type="molecule type" value="mRNA"/>
</dbReference>
<dbReference type="EMBL" id="AK032359">
    <property type="protein sequence ID" value="BAC27834.1"/>
    <property type="status" value="ALT_FRAME"/>
    <property type="molecule type" value="mRNA"/>
</dbReference>
<dbReference type="EMBL" id="AK132178">
    <property type="protein sequence ID" value="BAE21015.1"/>
    <property type="molecule type" value="mRNA"/>
</dbReference>
<dbReference type="EMBL" id="BC022704">
    <property type="protein sequence ID" value="AAH22704.1"/>
    <property type="molecule type" value="mRNA"/>
</dbReference>
<dbReference type="EMBL" id="BC058751">
    <property type="protein sequence ID" value="AAH58751.1"/>
    <property type="status" value="ALT_INIT"/>
    <property type="molecule type" value="mRNA"/>
</dbReference>
<dbReference type="EMBL" id="BC096487">
    <property type="protein sequence ID" value="AAH96487.1"/>
    <property type="molecule type" value="mRNA"/>
</dbReference>
<dbReference type="CCDS" id="CCDS28192.1"/>
<dbReference type="PIR" id="JC7802">
    <property type="entry name" value="JC7802"/>
</dbReference>
<dbReference type="RefSeq" id="NP_080715.2">
    <property type="nucleotide sequence ID" value="NM_026439.3"/>
</dbReference>
<dbReference type="RefSeq" id="XP_006522561.1">
    <property type="nucleotide sequence ID" value="XM_006522498.3"/>
</dbReference>
<dbReference type="RefSeq" id="XP_006522562.1">
    <property type="nucleotide sequence ID" value="XM_006522499.3"/>
</dbReference>
<dbReference type="RefSeq" id="XP_006522563.1">
    <property type="nucleotide sequence ID" value="XM_006522500.3"/>
</dbReference>
<dbReference type="RefSeq" id="XP_006522564.1">
    <property type="nucleotide sequence ID" value="XM_006522501.3"/>
</dbReference>
<dbReference type="SMR" id="Q8R2G6"/>
<dbReference type="BioGRID" id="212520">
    <property type="interactions" value="2"/>
</dbReference>
<dbReference type="FunCoup" id="Q8R2G6">
    <property type="interactions" value="220"/>
</dbReference>
<dbReference type="IntAct" id="Q8R2G6">
    <property type="interactions" value="1"/>
</dbReference>
<dbReference type="STRING" id="10090.ENSMUSP00000097097"/>
<dbReference type="GlyCosmos" id="Q8R2G6">
    <property type="glycosylation" value="1 site, No reported glycans"/>
</dbReference>
<dbReference type="GlyGen" id="Q8R2G6">
    <property type="glycosylation" value="3 sites, 1 O-linked glycan (1 site)"/>
</dbReference>
<dbReference type="iPTMnet" id="Q8R2G6"/>
<dbReference type="PhosphoSitePlus" id="Q8R2G6"/>
<dbReference type="PaxDb" id="10090-ENSMUSP00000097097"/>
<dbReference type="PeptideAtlas" id="Q8R2G6"/>
<dbReference type="ProteomicsDB" id="265719"/>
<dbReference type="Pumba" id="Q8R2G6"/>
<dbReference type="Antibodypedia" id="966">
    <property type="antibodies" value="101 antibodies from 16 providers"/>
</dbReference>
<dbReference type="DNASU" id="67896"/>
<dbReference type="Ensembl" id="ENSMUST00000061050.6">
    <property type="protein sequence ID" value="ENSMUSP00000058752.6"/>
    <property type="gene ID" value="ENSMUSG00000022665.16"/>
</dbReference>
<dbReference type="Ensembl" id="ENSMUST00000099498.10">
    <property type="protein sequence ID" value="ENSMUSP00000097097.3"/>
    <property type="gene ID" value="ENSMUSG00000022665.16"/>
</dbReference>
<dbReference type="GeneID" id="67896"/>
<dbReference type="KEGG" id="mmu:67896"/>
<dbReference type="UCSC" id="uc007zif.1">
    <property type="organism name" value="mouse"/>
</dbReference>
<dbReference type="AGR" id="MGI:1915146"/>
<dbReference type="CTD" id="151887"/>
<dbReference type="MGI" id="MGI:1915146">
    <property type="gene designation" value="Ccdc80"/>
</dbReference>
<dbReference type="VEuPathDB" id="HostDB:ENSMUSG00000022665"/>
<dbReference type="eggNOG" id="ENOG502QRG7">
    <property type="taxonomic scope" value="Eukaryota"/>
</dbReference>
<dbReference type="GeneTree" id="ENSGT00940000161699"/>
<dbReference type="HOGENOM" id="CLU_013508_0_0_1"/>
<dbReference type="InParanoid" id="Q8R2G6"/>
<dbReference type="OMA" id="DMRVKQY"/>
<dbReference type="OrthoDB" id="9898686at2759"/>
<dbReference type="PhylomeDB" id="Q8R2G6"/>
<dbReference type="TreeFam" id="TF332926"/>
<dbReference type="BioGRID-ORCS" id="67896">
    <property type="hits" value="3 hits in 76 CRISPR screens"/>
</dbReference>
<dbReference type="PRO" id="PR:Q8R2G6"/>
<dbReference type="Proteomes" id="UP000000589">
    <property type="component" value="Chromosome 16"/>
</dbReference>
<dbReference type="RNAct" id="Q8R2G6">
    <property type="molecule type" value="protein"/>
</dbReference>
<dbReference type="Bgee" id="ENSMUSG00000022665">
    <property type="expression patterns" value="Expressed in vault of skull and 226 other cell types or tissues"/>
</dbReference>
<dbReference type="GO" id="GO:0005604">
    <property type="term" value="C:basement membrane"/>
    <property type="evidence" value="ECO:0000314"/>
    <property type="project" value="MGI"/>
</dbReference>
<dbReference type="GO" id="GO:0031012">
    <property type="term" value="C:extracellular matrix"/>
    <property type="evidence" value="ECO:0000314"/>
    <property type="project" value="MGI"/>
</dbReference>
<dbReference type="GO" id="GO:0005576">
    <property type="term" value="C:extracellular region"/>
    <property type="evidence" value="ECO:0007669"/>
    <property type="project" value="UniProtKB-KW"/>
</dbReference>
<dbReference type="GO" id="GO:0005614">
    <property type="term" value="C:interstitial matrix"/>
    <property type="evidence" value="ECO:0000314"/>
    <property type="project" value="MGI"/>
</dbReference>
<dbReference type="GO" id="GO:0001968">
    <property type="term" value="F:fibronectin binding"/>
    <property type="evidence" value="ECO:0000314"/>
    <property type="project" value="MGI"/>
</dbReference>
<dbReference type="GO" id="GO:0005539">
    <property type="term" value="F:glycosaminoglycan binding"/>
    <property type="evidence" value="ECO:0000314"/>
    <property type="project" value="MGI"/>
</dbReference>
<dbReference type="GO" id="GO:0008201">
    <property type="term" value="F:heparin binding"/>
    <property type="evidence" value="ECO:0000314"/>
    <property type="project" value="MGI"/>
</dbReference>
<dbReference type="GO" id="GO:0030198">
    <property type="term" value="P:extracellular matrix organization"/>
    <property type="evidence" value="ECO:0000314"/>
    <property type="project" value="MGI"/>
</dbReference>
<dbReference type="GO" id="GO:0010811">
    <property type="term" value="P:positive regulation of cell-substrate adhesion"/>
    <property type="evidence" value="ECO:0000314"/>
    <property type="project" value="MGI"/>
</dbReference>
<dbReference type="GO" id="GO:0009617">
    <property type="term" value="P:response to bacterium"/>
    <property type="evidence" value="ECO:0000270"/>
    <property type="project" value="MGI"/>
</dbReference>
<dbReference type="InterPro" id="IPR025232">
    <property type="entry name" value="DUF4174"/>
</dbReference>
<dbReference type="PANTHER" id="PTHR46792">
    <property type="entry name" value="COILED-COIL DOMAIN-CONTAINING PROTEIN 80"/>
    <property type="match status" value="1"/>
</dbReference>
<dbReference type="PANTHER" id="PTHR46792:SF2">
    <property type="entry name" value="COILED-COIL DOMAIN-CONTAINING PROTEIN 80"/>
    <property type="match status" value="1"/>
</dbReference>
<dbReference type="Pfam" id="PF13778">
    <property type="entry name" value="DUF4174"/>
    <property type="match status" value="3"/>
</dbReference>
<organism>
    <name type="scientific">Mus musculus</name>
    <name type="common">Mouse</name>
    <dbReference type="NCBI Taxonomy" id="10090"/>
    <lineage>
        <taxon>Eukaryota</taxon>
        <taxon>Metazoa</taxon>
        <taxon>Chordata</taxon>
        <taxon>Craniata</taxon>
        <taxon>Vertebrata</taxon>
        <taxon>Euteleostomi</taxon>
        <taxon>Mammalia</taxon>
        <taxon>Eutheria</taxon>
        <taxon>Euarchontoglires</taxon>
        <taxon>Glires</taxon>
        <taxon>Rodentia</taxon>
        <taxon>Myomorpha</taxon>
        <taxon>Muroidea</taxon>
        <taxon>Muridae</taxon>
        <taxon>Murinae</taxon>
        <taxon>Mus</taxon>
        <taxon>Mus</taxon>
    </lineage>
</organism>
<reference key="1">
    <citation type="journal article" date="2002" name="Biochem. Biophys. Res. Commun.">
        <title>Cloning, expression, and mapping of a gene that is upregulated in adipose tissue of mice deficient in bombesin receptor subtype-3.</title>
        <authorList>
            <person name="Aoki K."/>
            <person name="Sun Y.-J."/>
            <person name="Aoki S."/>
            <person name="Wada K."/>
            <person name="Wada E."/>
        </authorList>
    </citation>
    <scope>NUCLEOTIDE SEQUENCE [MRNA]</scope>
    <scope>INDUCTION</scope>
    <source>
        <strain>C57BL/6J</strain>
        <tissue>White adipose tissue</tissue>
    </source>
</reference>
<reference key="2">
    <citation type="journal article" date="2005" name="Science">
        <title>The transcriptional landscape of the mammalian genome.</title>
        <authorList>
            <person name="Carninci P."/>
            <person name="Kasukawa T."/>
            <person name="Katayama S."/>
            <person name="Gough J."/>
            <person name="Frith M.C."/>
            <person name="Maeda N."/>
            <person name="Oyama R."/>
            <person name="Ravasi T."/>
            <person name="Lenhard B."/>
            <person name="Wells C."/>
            <person name="Kodzius R."/>
            <person name="Shimokawa K."/>
            <person name="Bajic V.B."/>
            <person name="Brenner S.E."/>
            <person name="Batalov S."/>
            <person name="Forrest A.R."/>
            <person name="Zavolan M."/>
            <person name="Davis M.J."/>
            <person name="Wilming L.G."/>
            <person name="Aidinis V."/>
            <person name="Allen J.E."/>
            <person name="Ambesi-Impiombato A."/>
            <person name="Apweiler R."/>
            <person name="Aturaliya R.N."/>
            <person name="Bailey T.L."/>
            <person name="Bansal M."/>
            <person name="Baxter L."/>
            <person name="Beisel K.W."/>
            <person name="Bersano T."/>
            <person name="Bono H."/>
            <person name="Chalk A.M."/>
            <person name="Chiu K.P."/>
            <person name="Choudhary V."/>
            <person name="Christoffels A."/>
            <person name="Clutterbuck D.R."/>
            <person name="Crowe M.L."/>
            <person name="Dalla E."/>
            <person name="Dalrymple B.P."/>
            <person name="de Bono B."/>
            <person name="Della Gatta G."/>
            <person name="di Bernardo D."/>
            <person name="Down T."/>
            <person name="Engstrom P."/>
            <person name="Fagiolini M."/>
            <person name="Faulkner G."/>
            <person name="Fletcher C.F."/>
            <person name="Fukushima T."/>
            <person name="Furuno M."/>
            <person name="Futaki S."/>
            <person name="Gariboldi M."/>
            <person name="Georgii-Hemming P."/>
            <person name="Gingeras T.R."/>
            <person name="Gojobori T."/>
            <person name="Green R.E."/>
            <person name="Gustincich S."/>
            <person name="Harbers M."/>
            <person name="Hayashi Y."/>
            <person name="Hensch T.K."/>
            <person name="Hirokawa N."/>
            <person name="Hill D."/>
            <person name="Huminiecki L."/>
            <person name="Iacono M."/>
            <person name="Ikeo K."/>
            <person name="Iwama A."/>
            <person name="Ishikawa T."/>
            <person name="Jakt M."/>
            <person name="Kanapin A."/>
            <person name="Katoh M."/>
            <person name="Kawasawa Y."/>
            <person name="Kelso J."/>
            <person name="Kitamura H."/>
            <person name="Kitano H."/>
            <person name="Kollias G."/>
            <person name="Krishnan S.P."/>
            <person name="Kruger A."/>
            <person name="Kummerfeld S.K."/>
            <person name="Kurochkin I.V."/>
            <person name="Lareau L.F."/>
            <person name="Lazarevic D."/>
            <person name="Lipovich L."/>
            <person name="Liu J."/>
            <person name="Liuni S."/>
            <person name="McWilliam S."/>
            <person name="Madan Babu M."/>
            <person name="Madera M."/>
            <person name="Marchionni L."/>
            <person name="Matsuda H."/>
            <person name="Matsuzawa S."/>
            <person name="Miki H."/>
            <person name="Mignone F."/>
            <person name="Miyake S."/>
            <person name="Morris K."/>
            <person name="Mottagui-Tabar S."/>
            <person name="Mulder N."/>
            <person name="Nakano N."/>
            <person name="Nakauchi H."/>
            <person name="Ng P."/>
            <person name="Nilsson R."/>
            <person name="Nishiguchi S."/>
            <person name="Nishikawa S."/>
            <person name="Nori F."/>
            <person name="Ohara O."/>
            <person name="Okazaki Y."/>
            <person name="Orlando V."/>
            <person name="Pang K.C."/>
            <person name="Pavan W.J."/>
            <person name="Pavesi G."/>
            <person name="Pesole G."/>
            <person name="Petrovsky N."/>
            <person name="Piazza S."/>
            <person name="Reed J."/>
            <person name="Reid J.F."/>
            <person name="Ring B.Z."/>
            <person name="Ringwald M."/>
            <person name="Rost B."/>
            <person name="Ruan Y."/>
            <person name="Salzberg S.L."/>
            <person name="Sandelin A."/>
            <person name="Schneider C."/>
            <person name="Schoenbach C."/>
            <person name="Sekiguchi K."/>
            <person name="Semple C.A."/>
            <person name="Seno S."/>
            <person name="Sessa L."/>
            <person name="Sheng Y."/>
            <person name="Shibata Y."/>
            <person name="Shimada H."/>
            <person name="Shimada K."/>
            <person name="Silva D."/>
            <person name="Sinclair B."/>
            <person name="Sperling S."/>
            <person name="Stupka E."/>
            <person name="Sugiura K."/>
            <person name="Sultana R."/>
            <person name="Takenaka Y."/>
            <person name="Taki K."/>
            <person name="Tammoja K."/>
            <person name="Tan S.L."/>
            <person name="Tang S."/>
            <person name="Taylor M.S."/>
            <person name="Tegner J."/>
            <person name="Teichmann S.A."/>
            <person name="Ueda H.R."/>
            <person name="van Nimwegen E."/>
            <person name="Verardo R."/>
            <person name="Wei C.L."/>
            <person name="Yagi K."/>
            <person name="Yamanishi H."/>
            <person name="Zabarovsky E."/>
            <person name="Zhu S."/>
            <person name="Zimmer A."/>
            <person name="Hide W."/>
            <person name="Bult C."/>
            <person name="Grimmond S.M."/>
            <person name="Teasdale R.D."/>
            <person name="Liu E.T."/>
            <person name="Brusic V."/>
            <person name="Quackenbush J."/>
            <person name="Wahlestedt C."/>
            <person name="Mattick J.S."/>
            <person name="Hume D.A."/>
            <person name="Kai C."/>
            <person name="Sasaki D."/>
            <person name="Tomaru Y."/>
            <person name="Fukuda S."/>
            <person name="Kanamori-Katayama M."/>
            <person name="Suzuki M."/>
            <person name="Aoki J."/>
            <person name="Arakawa T."/>
            <person name="Iida J."/>
            <person name="Imamura K."/>
            <person name="Itoh M."/>
            <person name="Kato T."/>
            <person name="Kawaji H."/>
            <person name="Kawagashira N."/>
            <person name="Kawashima T."/>
            <person name="Kojima M."/>
            <person name="Kondo S."/>
            <person name="Konno H."/>
            <person name="Nakano K."/>
            <person name="Ninomiya N."/>
            <person name="Nishio T."/>
            <person name="Okada M."/>
            <person name="Plessy C."/>
            <person name="Shibata K."/>
            <person name="Shiraki T."/>
            <person name="Suzuki S."/>
            <person name="Tagami M."/>
            <person name="Waki K."/>
            <person name="Watahiki A."/>
            <person name="Okamura-Oho Y."/>
            <person name="Suzuki H."/>
            <person name="Kawai J."/>
            <person name="Hayashizaki Y."/>
        </authorList>
    </citation>
    <scope>NUCLEOTIDE SEQUENCE [LARGE SCALE MRNA]</scope>
    <source>
        <strain>C57BL/6J</strain>
        <tissue>Head</tissue>
        <tissue>Olfactory bulb</tissue>
        <tissue>Tongue</tissue>
        <tissue>Wolffian duct</tissue>
    </source>
</reference>
<reference key="3">
    <citation type="journal article" date="2004" name="Genome Res.">
        <title>The status, quality, and expansion of the NIH full-length cDNA project: the Mammalian Gene Collection (MGC).</title>
        <authorList>
            <consortium name="The MGC Project Team"/>
        </authorList>
    </citation>
    <scope>NUCLEOTIDE SEQUENCE [LARGE SCALE MRNA] OF 1-586</scope>
    <source>
        <strain>FVB/N</strain>
        <strain>FVB/N-3</strain>
        <strain>NMRI</strain>
        <tissue>Mammary tumor</tissue>
    </source>
</reference>
<reference key="4">
    <citation type="journal article" date="2004" name="Biochem. Biophys. Res. Commun.">
        <title>URB expression in human bone marrow stromal cells and during mouse development.</title>
        <authorList>
            <person name="Liu Y."/>
            <person name="Monticone M."/>
            <person name="Tonachini L."/>
            <person name="Mastrogiacomo M."/>
            <person name="Marigo V."/>
            <person name="Cancedda R."/>
            <person name="Castagnola P."/>
        </authorList>
    </citation>
    <scope>SUBCELLULAR LOCATION</scope>
    <scope>DEVELOPMENTAL STAGE</scope>
    <scope>PHOSPHORYLATION</scope>
    <source>
        <tissue>Hair follicle dermal papilla</tissue>
    </source>
</reference>
<reference key="5">
    <citation type="journal article" date="2008" name="Proc. Natl. Acad. Sci. U.S.A.">
        <title>Transcriptome-based systematic identification of extracellular matrix proteins.</title>
        <authorList>
            <person name="Manabe R."/>
            <person name="Tsutsui K."/>
            <person name="Yamada T."/>
            <person name="Kimura M."/>
            <person name="Nakano I."/>
            <person name="Shimono C."/>
            <person name="Sanzen N."/>
            <person name="Furutani Y."/>
            <person name="Fukuda T."/>
            <person name="Oguri Y."/>
            <person name="Shimamoto K."/>
            <person name="Kiyozumi D."/>
            <person name="Sato Y."/>
            <person name="Sado Y."/>
            <person name="Senoo H."/>
            <person name="Yamashina S."/>
            <person name="Fukuda S."/>
            <person name="Kawai J."/>
            <person name="Sugiura N."/>
            <person name="Kimata K."/>
            <person name="Hayashizaki Y."/>
            <person name="Sekiguchi K."/>
        </authorList>
    </citation>
    <scope>FUNCTION</scope>
    <scope>SUBUNIT</scope>
    <scope>SUBCELLULAR LOCATION</scope>
    <scope>DEVELOPMENTAL STAGE</scope>
</reference>
<proteinExistence type="evidence at protein level"/>
<comment type="function">
    <text evidence="6">Promotes cell adhesion and matrix assembly.</text>
</comment>
<comment type="subunit">
    <text evidence="6">Binds to various extracellular matrix proteins.</text>
</comment>
<comment type="subcellular location">
    <subcellularLocation>
        <location evidence="5 6">Secreted</location>
        <location evidence="5 6">Extracellular space</location>
        <location evidence="5 6">Extracellular matrix</location>
    </subcellularLocation>
</comment>
<comment type="tissue specificity">
    <text>Expressed in brain, stomach, colon, rectum, liver, lung, kidney, adipocytes and testis.</text>
</comment>
<comment type="developmental stage">
    <text evidence="5 6">Expressed in embryo at 7 dpc onwards. Expressed in rib, sternal cartilage, heart, kidney, leg muscles, intestine and limb at 7 dpc. Expressed in chondrocytes at 14.5 dpc. Expressed in cartilage at 14 dpc. Present in rib cartilage and choroid plexus epithelium at 16.5 dpc (at protein level).</text>
</comment>
<comment type="induction">
    <text evidence="4">Up-regulated in adipose tissue of obese BRS-3-deficient mice.</text>
</comment>
<comment type="PTM">
    <text evidence="5">Phosphorylated.</text>
</comment>
<comment type="similarity">
    <text evidence="7">Belongs to the CCDC80 family.</text>
</comment>
<comment type="sequence caution" evidence="7">
    <conflict type="erroneous initiation">
        <sequence resource="EMBL-CDS" id="AAH58751"/>
    </conflict>
</comment>
<comment type="sequence caution" evidence="7">
    <conflict type="frameshift">
        <sequence resource="EMBL-CDS" id="BAB26508"/>
    </conflict>
</comment>
<comment type="sequence caution" evidence="7">
    <conflict type="frameshift">
        <sequence resource="EMBL-CDS" id="BAB32018"/>
    </conflict>
</comment>
<comment type="sequence caution" evidence="7">
    <conflict type="frameshift">
        <sequence resource="EMBL-CDS" id="BAC27834"/>
    </conflict>
</comment>
<sequence>MMWKMGPHFTTLLAMWLVCGSASHSPALDSDSHTGRKVPLVSPISSRSARYLRHTGRSGGVEKSTQEEPNPQPFQRRKSVPVLRLAHPTMRPPPSGINGVPVRPEVRPIARSSAREMVRDEGSSARTRMLRFPSGSSSPNILASFAGKNRVWVISAPHASEGYYRLMMSLLKDDVYCELAERHIQQIVLFHQAGEEGGKVRRITNEGQILEQPLDPNLIPKLMSFLKLEKGKFSMVLLKKTLQVEERYPYPVRLEAMYEVIDQGPIRRIEKIRQKGFVQKCKASGIEGHVVQEGNEGGGGAGGTGLGGDKRKEDPRRTQVHPTREAPRKQATSKAATPQPPPTPRATTLPPAPVTTATRATSRVVTIAARPTTTTAYPATQRPWTSRLHPFSVSHRPPATAEVTTARGPSVSEQLYPLPRKEQQREKPQATRRPSKATNYGSFTATPPPTLWEVSARVVGTSRFRDNRTDKREHGHQDPNAVPGPHKPVKGKLPKKKDRILSNEYEDKYDLSQPTSSQGEEERQVDSVPSQNAKESKKLEKLEKPEKEKKKKGKSAKQDKLLKSEKQAKKAEKKTKQEKDKNKKKKAGKTEQDDNQKPTAKHLAPSPKKSVADLLGSFEGKRRLLLITTPKAENNMYVQQRDEYLESFCKMATRRISVVTIFGPVNNSSMKIDHFQLDNEKPMRVVDDDDLVDQHLISELRKEYGMTYDDFFMVLTDVDLRVKQYYEVPIAMKSVFDLIDTFQSRIKDMEKQKKEGIACKEDKRQSLENFLSRFRWRRRLLVISAPNDEDWAYSQQLSALNGQACNFGLRHITILKLLGVGEEVGGVLELFPINGSSIVEREDVPAHLVKDIRNYFQVSPEYFSMLLVGKDGNVKSWYPSPMWSMVIVYDLIDSMQLRRQEMAIQQSLGMRCPEDEYAGYGYHSYHQGYQDGYQDDYRHHESYHHGYPY</sequence>
<protein>
    <recommendedName>
        <fullName>Coiled-coil domain-containing protein 80</fullName>
    </recommendedName>
    <alternativeName>
        <fullName>Up-regulated in BRS-3 deficient mouse</fullName>
    </alternativeName>
</protein>
<feature type="signal peptide" evidence="2">
    <location>
        <begin position="1"/>
        <end position="22"/>
    </location>
</feature>
<feature type="chain" id="PRO_0000282419" description="Coiled-coil domain-containing protein 80">
    <location>
        <begin position="23"/>
        <end position="949"/>
    </location>
</feature>
<feature type="region of interest" description="Disordered" evidence="3">
    <location>
        <begin position="24"/>
        <end position="79"/>
    </location>
</feature>
<feature type="region of interest" description="Disordered" evidence="3">
    <location>
        <begin position="112"/>
        <end position="132"/>
    </location>
</feature>
<feature type="region of interest" description="Disordered" evidence="3">
    <location>
        <begin position="289"/>
        <end position="610"/>
    </location>
</feature>
<feature type="coiled-coil region" evidence="2">
    <location>
        <begin position="554"/>
        <end position="587"/>
    </location>
</feature>
<feature type="compositionally biased region" description="Basic and acidic residues" evidence="3">
    <location>
        <begin position="112"/>
        <end position="123"/>
    </location>
</feature>
<feature type="compositionally biased region" description="Gly residues" evidence="3">
    <location>
        <begin position="295"/>
        <end position="307"/>
    </location>
</feature>
<feature type="compositionally biased region" description="Basic and acidic residues" evidence="3">
    <location>
        <begin position="308"/>
        <end position="328"/>
    </location>
</feature>
<feature type="compositionally biased region" description="Low complexity" evidence="3">
    <location>
        <begin position="345"/>
        <end position="380"/>
    </location>
</feature>
<feature type="compositionally biased region" description="Basic and acidic residues" evidence="3">
    <location>
        <begin position="419"/>
        <end position="429"/>
    </location>
</feature>
<feature type="compositionally biased region" description="Polar residues" evidence="3">
    <location>
        <begin position="436"/>
        <end position="445"/>
    </location>
</feature>
<feature type="compositionally biased region" description="Basic and acidic residues" evidence="3">
    <location>
        <begin position="463"/>
        <end position="477"/>
    </location>
</feature>
<feature type="compositionally biased region" description="Basic residues" evidence="3">
    <location>
        <begin position="487"/>
        <end position="498"/>
    </location>
</feature>
<feature type="compositionally biased region" description="Basic and acidic residues" evidence="3">
    <location>
        <begin position="499"/>
        <end position="510"/>
    </location>
</feature>
<feature type="compositionally biased region" description="Basic and acidic residues" evidence="3">
    <location>
        <begin position="534"/>
        <end position="548"/>
    </location>
</feature>
<feature type="compositionally biased region" description="Basic and acidic residues" evidence="3">
    <location>
        <begin position="556"/>
        <end position="581"/>
    </location>
</feature>
<feature type="glycosylation site" description="N-linked (GlcNAc...) asparagine" evidence="2">
    <location>
        <position position="467"/>
    </location>
</feature>
<feature type="cross-link" description="Glycyl lysine isopeptide (Lys-Gly) (interchain with G-Cter in SUMO2)" evidence="1">
    <location>
        <position position="544"/>
    </location>
</feature>
<feature type="cross-link" description="Glycyl lysine isopeptide (Lys-Gly) (interchain with G-Cter in SUMO2)" evidence="1">
    <location>
        <position position="547"/>
    </location>
</feature>
<feature type="sequence conflict" description="In Ref. 3; AAH58751/AAH96487." evidence="7" ref="3">
    <original>T</original>
    <variation>A</variation>
    <location>
        <position position="34"/>
    </location>
</feature>
<feature type="sequence conflict" description="In Ref. 3; AAH22704/AAH58751/AAH96487." evidence="7" ref="3">
    <original>E</original>
    <variation>D</variation>
    <location>
        <position position="296"/>
    </location>
</feature>
<feature type="sequence conflict" description="In Ref. 2; BAC27834." evidence="7" ref="2">
    <original>R</original>
    <variation>M</variation>
    <location>
        <position position="407"/>
    </location>
</feature>
<feature type="sequence conflict" description="In Ref. 3; AAH22704/AAH58751/AAH96487." evidence="7" ref="3">
    <original>T</original>
    <variation>S</variation>
    <location>
        <position position="444"/>
    </location>
</feature>
<feature type="sequence conflict" description="In Ref. 3; AAH22704/AAH58751/AAH96487." evidence="7" ref="3">
    <original>A</original>
    <variation>T</variation>
    <location>
        <position position="456"/>
    </location>
</feature>
<feature type="sequence conflict" description="In Ref. 3; AAH22704/AAH58751/AAH96487." evidence="7" ref="3">
    <original>A</original>
    <variation>V</variation>
    <location>
        <position position="481"/>
    </location>
</feature>
<feature type="sequence conflict" description="In Ref. 3; AAH22704/AAH58751/AAH96487." evidence="7" ref="3">
    <original>D</original>
    <variation>A</variation>
    <location>
        <position position="507"/>
    </location>
</feature>
<feature type="sequence conflict" description="In Ref. 1; BAB85613." evidence="7" ref="1">
    <original>Q</original>
    <variation>R</variation>
    <location>
        <position position="524"/>
    </location>
</feature>
<feature type="sequence conflict" description="In Ref. 3; AAH22704." evidence="7" ref="3">
    <original>T</original>
    <variation>S</variation>
    <location>
        <position position="575"/>
    </location>
</feature>
<feature type="sequence conflict" description="In Ref. 3; AAH22704." evidence="7" ref="3">
    <original>N</original>
    <variation>K</variation>
    <location>
        <position position="582"/>
    </location>
</feature>
<feature type="sequence conflict" description="In Ref. 2; BAB27498." evidence="7" ref="2">
    <original>R</original>
    <variation>T</variation>
    <location>
        <position position="778"/>
    </location>
</feature>
<name>CCD80_MOUSE</name>
<keyword id="KW-0175">Coiled coil</keyword>
<keyword id="KW-0272">Extracellular matrix</keyword>
<keyword id="KW-0325">Glycoprotein</keyword>
<keyword id="KW-1017">Isopeptide bond</keyword>
<keyword id="KW-0597">Phosphoprotein</keyword>
<keyword id="KW-1185">Reference proteome</keyword>
<keyword id="KW-0964">Secreted</keyword>
<keyword id="KW-0732">Signal</keyword>
<keyword id="KW-0832">Ubl conjugation</keyword>